<keyword id="KW-0119">Carbohydrate metabolism</keyword>
<keyword id="KW-0456">Lyase</keyword>
<keyword id="KW-0511">Multifunctional enzyme</keyword>
<keyword id="KW-1185">Reference proteome</keyword>
<reference key="1">
    <citation type="journal article" date="1996" name="Science">
        <title>Complete genome sequence of the methanogenic archaeon, Methanococcus jannaschii.</title>
        <authorList>
            <person name="Bult C.J."/>
            <person name="White O."/>
            <person name="Olsen G.J."/>
            <person name="Zhou L."/>
            <person name="Fleischmann R.D."/>
            <person name="Sutton G.G."/>
            <person name="Blake J.A."/>
            <person name="FitzGerald L.M."/>
            <person name="Clayton R.A."/>
            <person name="Gocayne J.D."/>
            <person name="Kerlavage A.R."/>
            <person name="Dougherty B.A."/>
            <person name="Tomb J.-F."/>
            <person name="Adams M.D."/>
            <person name="Reich C.I."/>
            <person name="Overbeek R."/>
            <person name="Kirkness E.F."/>
            <person name="Weinstock K.G."/>
            <person name="Merrick J.M."/>
            <person name="Glodek A."/>
            <person name="Scott J.L."/>
            <person name="Geoghagen N.S.M."/>
            <person name="Weidman J.F."/>
            <person name="Fuhrmann J.L."/>
            <person name="Nguyen D."/>
            <person name="Utterback T.R."/>
            <person name="Kelley J.M."/>
            <person name="Peterson J.D."/>
            <person name="Sadow P.W."/>
            <person name="Hanna M.C."/>
            <person name="Cotton M.D."/>
            <person name="Roberts K.M."/>
            <person name="Hurst M.A."/>
            <person name="Kaine B.P."/>
            <person name="Borodovsky M."/>
            <person name="Klenk H.-P."/>
            <person name="Fraser C.M."/>
            <person name="Smith H.O."/>
            <person name="Woese C.R."/>
            <person name="Venter J.C."/>
        </authorList>
    </citation>
    <scope>NUCLEOTIDE SEQUENCE [LARGE SCALE GENOMIC DNA]</scope>
    <source>
        <strain>ATCC 43067 / DSM 2661 / JAL-1 / JCM 10045 / NBRC 100440</strain>
    </source>
</reference>
<reference key="2">
    <citation type="journal article" date="2005" name="J. Bacteriol.">
        <title>Ribose-5-phosphate biosynthesis in Methanocaldococcus jannaschii occurs in the absence of a pentose-phosphate pathway.</title>
        <authorList>
            <person name="Grochowski L.L."/>
            <person name="Xu H."/>
            <person name="White R.H."/>
        </authorList>
    </citation>
    <scope>FUNCTION AS A HPS</scope>
    <scope>PATHWAY</scope>
</reference>
<comment type="function">
    <text evidence="1 3">Catalyzes the condensation of formaldehyde with tetrahydromethanopterin (H(4)MPT) to 5,10-methylenetetrahydromethanopterin.</text>
</comment>
<comment type="function">
    <text evidence="1 2">Catalyzes the reversible formation of ribulose-5-phosphate and formaldehyde from 3-hexulose-6-phosphate.</text>
</comment>
<comment type="catalytic activity">
    <reaction evidence="1">
        <text>5,6,7,8-tetrahydromethanopterin + formaldehyde = 5,10-methylenetetrahydromethanopterin + H2O</text>
        <dbReference type="Rhea" id="RHEA:24678"/>
        <dbReference type="ChEBI" id="CHEBI:15377"/>
        <dbReference type="ChEBI" id="CHEBI:16842"/>
        <dbReference type="ChEBI" id="CHEBI:57818"/>
        <dbReference type="ChEBI" id="CHEBI:58103"/>
        <dbReference type="EC" id="4.2.1.147"/>
    </reaction>
</comment>
<comment type="catalytic activity">
    <reaction evidence="1 2">
        <text>D-ribulose 5-phosphate + formaldehyde = D-arabino-hex-3-ulose 6-phosphate</text>
        <dbReference type="Rhea" id="RHEA:25201"/>
        <dbReference type="ChEBI" id="CHEBI:16842"/>
        <dbReference type="ChEBI" id="CHEBI:58121"/>
        <dbReference type="ChEBI" id="CHEBI:58542"/>
        <dbReference type="EC" id="4.1.2.43"/>
    </reaction>
</comment>
<comment type="pathway">
    <text evidence="1 2">Carbohydrate biosynthesis; D-ribose 5-phosphate biosynthesis.</text>
</comment>
<comment type="similarity">
    <text evidence="1">In the N-terminal section; belongs to the formaldehyde-activating enzyme family.</text>
</comment>
<comment type="similarity">
    <text evidence="1">In the C-terminal section; belongs to the HPS/KGPDC family. HPS subfamily.</text>
</comment>
<comment type="caution">
    <text evidence="4">Ile-16 is present instead of the conserved His which is expected to be an active site residue. Substrate-binding sites are also not conserved. Thus, this enzyme may not display fae activity.</text>
</comment>
<dbReference type="EC" id="4.2.1.147" evidence="1"/>
<dbReference type="EC" id="4.1.2.43" evidence="1 2"/>
<dbReference type="EMBL" id="L77117">
    <property type="protein sequence ID" value="AAB99456.1"/>
    <property type="molecule type" value="Genomic_DNA"/>
</dbReference>
<dbReference type="PIR" id="F64480">
    <property type="entry name" value="F64480"/>
</dbReference>
<dbReference type="RefSeq" id="WP_010870967.1">
    <property type="nucleotide sequence ID" value="NC_000909.1"/>
</dbReference>
<dbReference type="SMR" id="Q58842"/>
<dbReference type="FunCoup" id="Q58842">
    <property type="interactions" value="160"/>
</dbReference>
<dbReference type="STRING" id="243232.MJ_1447"/>
<dbReference type="PaxDb" id="243232-MJ_1447"/>
<dbReference type="DNASU" id="1452351"/>
<dbReference type="EnsemblBacteria" id="AAB99456">
    <property type="protein sequence ID" value="AAB99456"/>
    <property type="gene ID" value="MJ_1447"/>
</dbReference>
<dbReference type="GeneID" id="1452351"/>
<dbReference type="KEGG" id="mja:MJ_1447"/>
<dbReference type="eggNOG" id="arCOG00103">
    <property type="taxonomic scope" value="Archaea"/>
</dbReference>
<dbReference type="HOGENOM" id="CLU_701335_0_0_2"/>
<dbReference type="InParanoid" id="Q58842"/>
<dbReference type="OrthoDB" id="64276at2157"/>
<dbReference type="PhylomeDB" id="Q58842"/>
<dbReference type="UniPathway" id="UPA00293"/>
<dbReference type="Proteomes" id="UP000000805">
    <property type="component" value="Chromosome"/>
</dbReference>
<dbReference type="GO" id="GO:0033982">
    <property type="term" value="F:3-dehydro-L-gulonate-6-phosphate decarboxylase activity"/>
    <property type="evidence" value="ECO:0000318"/>
    <property type="project" value="GO_Central"/>
</dbReference>
<dbReference type="GO" id="GO:0016840">
    <property type="term" value="F:carbon-nitrogen lyase activity"/>
    <property type="evidence" value="ECO:0007669"/>
    <property type="project" value="InterPro"/>
</dbReference>
<dbReference type="GO" id="GO:0043801">
    <property type="term" value="F:hexulose-6-phosphate synthase activity"/>
    <property type="evidence" value="ECO:0007669"/>
    <property type="project" value="UniProtKB-UniRule"/>
</dbReference>
<dbReference type="GO" id="GO:0016836">
    <property type="term" value="F:hydro-lyase activity"/>
    <property type="evidence" value="ECO:0007669"/>
    <property type="project" value="UniProtKB-UniRule"/>
</dbReference>
<dbReference type="GO" id="GO:0004590">
    <property type="term" value="F:orotidine-5'-phosphate decarboxylase activity"/>
    <property type="evidence" value="ECO:0007669"/>
    <property type="project" value="InterPro"/>
</dbReference>
<dbReference type="GO" id="GO:0006207">
    <property type="term" value="P:'de novo' pyrimidine nucleobase biosynthetic process"/>
    <property type="evidence" value="ECO:0007669"/>
    <property type="project" value="InterPro"/>
</dbReference>
<dbReference type="GO" id="GO:0016051">
    <property type="term" value="P:carbohydrate biosynthetic process"/>
    <property type="evidence" value="ECO:0007669"/>
    <property type="project" value="UniProtKB-UniRule"/>
</dbReference>
<dbReference type="GO" id="GO:0019854">
    <property type="term" value="P:L-ascorbic acid catabolic process"/>
    <property type="evidence" value="ECO:0000318"/>
    <property type="project" value="GO_Central"/>
</dbReference>
<dbReference type="CDD" id="cd04726">
    <property type="entry name" value="KGPDC_HPS"/>
    <property type="match status" value="1"/>
</dbReference>
<dbReference type="Gene3D" id="3.20.20.70">
    <property type="entry name" value="Aldolase class I"/>
    <property type="match status" value="1"/>
</dbReference>
<dbReference type="Gene3D" id="3.30.230.60">
    <property type="entry name" value="Formaldehyde-activating enzyme"/>
    <property type="match status" value="1"/>
</dbReference>
<dbReference type="HAMAP" id="MF_01268">
    <property type="entry name" value="Fae_Hps"/>
    <property type="match status" value="1"/>
</dbReference>
<dbReference type="InterPro" id="IPR013785">
    <property type="entry name" value="Aldolase_TIM"/>
</dbReference>
<dbReference type="InterPro" id="IPR020868">
    <property type="entry name" value="Fae/Hps"/>
</dbReference>
<dbReference type="InterPro" id="IPR014826">
    <property type="entry name" value="HCHO-activating_enzyme"/>
</dbReference>
<dbReference type="InterPro" id="IPR037075">
    <property type="entry name" value="HCHO-activating_enzyme_sf"/>
</dbReference>
<dbReference type="InterPro" id="IPR041710">
    <property type="entry name" value="HPS/KGPDC"/>
</dbReference>
<dbReference type="InterPro" id="IPR001754">
    <property type="entry name" value="OMPdeCOase_dom"/>
</dbReference>
<dbReference type="InterPro" id="IPR020568">
    <property type="entry name" value="Ribosomal_Su5_D2-typ_SF"/>
</dbReference>
<dbReference type="InterPro" id="IPR011060">
    <property type="entry name" value="RibuloseP-bd_barrel"/>
</dbReference>
<dbReference type="NCBIfam" id="NF009833">
    <property type="entry name" value="PRK13307.1"/>
    <property type="match status" value="1"/>
</dbReference>
<dbReference type="PANTHER" id="PTHR35039">
    <property type="entry name" value="3-KETO-L-GULONATE-6-PHOSPHATE DECARBOXYLASE SGBH-RELATED"/>
    <property type="match status" value="1"/>
</dbReference>
<dbReference type="PANTHER" id="PTHR35039:SF3">
    <property type="entry name" value="3-KETO-L-GULONATE-6-PHOSPHATE DECARBOXYLASE SGBH-RELATED"/>
    <property type="match status" value="1"/>
</dbReference>
<dbReference type="Pfam" id="PF08714">
    <property type="entry name" value="Fae"/>
    <property type="match status" value="1"/>
</dbReference>
<dbReference type="Pfam" id="PF00215">
    <property type="entry name" value="OMPdecase"/>
    <property type="match status" value="1"/>
</dbReference>
<dbReference type="SMART" id="SM00934">
    <property type="entry name" value="OMPdecase"/>
    <property type="match status" value="1"/>
</dbReference>
<dbReference type="SUPFAM" id="SSF54211">
    <property type="entry name" value="Ribosomal protein S5 domain 2-like"/>
    <property type="match status" value="1"/>
</dbReference>
<dbReference type="SUPFAM" id="SSF51366">
    <property type="entry name" value="Ribulose-phoshate binding barrel"/>
    <property type="match status" value="1"/>
</dbReference>
<gene>
    <name evidence="1" type="primary">fae-hps</name>
    <name type="ordered locus">MJ1447</name>
</gene>
<name>FAEHP_METJA</name>
<feature type="chain" id="PRO_0000212107" description="Bifunctional enzyme Fae/Hps">
    <location>
        <begin position="1"/>
        <end position="381"/>
    </location>
</feature>
<feature type="region of interest" description="Formaldehyde-activating enzyme" evidence="1">
    <location>
        <begin position="1"/>
        <end position="150"/>
    </location>
</feature>
<feature type="region of interest" description="3-hexulose-6-phosphate synthase" evidence="1">
    <location>
        <begin position="151"/>
        <end position="381"/>
    </location>
</feature>
<evidence type="ECO:0000255" key="1">
    <source>
        <dbReference type="HAMAP-Rule" id="MF_01268"/>
    </source>
</evidence>
<evidence type="ECO:0000269" key="2">
    <source>
    </source>
</evidence>
<evidence type="ECO:0000303" key="3">
    <source>
    </source>
</evidence>
<evidence type="ECO:0000305" key="4"/>
<proteinExistence type="evidence at protein level"/>
<sequence>MIKFGEAVLGNEIKAIVNVALGKGELIENTFTNALTRGNCVFANLRPNLIVKPLTLVVPRHNIESEIQDELFQGVIQYAVAKAVADLDLDEDLKVVVSVNVPEVPITNLNKRKLFQYFYASAKLAINRALNEYPSKEKVKKEKYRALHPLVGFRDVRLEYPPYLQIALDVPTMENLEFLLQTIPNSDHIILEAGTPLIKKFGLEVIEIMREYFDGFIVADLKTLDTGRVEVRLAFEATANAVAISGVAPKSTIIKAIHECQKCGLISYLDMMNVSEPQKLYDSLKLKPDVVILHRGIDEETFGIKKEWKFKENCLLAIAGGVGVENVEELLKEYQILIVGRAITKSKDPGRVIRMFINKMGYDIDTYRLYFDEDEDIGEEL</sequence>
<accession>Q58842</accession>
<protein>
    <recommendedName>
        <fullName evidence="1">Bifunctional enzyme Fae/Hps</fullName>
    </recommendedName>
    <domain>
        <recommendedName>
            <fullName evidence="1">5,6,7,8-tetrahydromethanopterin hydro-lyase</fullName>
            <ecNumber evidence="1">4.2.1.147</ecNumber>
        </recommendedName>
        <alternativeName>
            <fullName evidence="1 3">Formaldehyde-activating enzyme</fullName>
            <shortName evidence="1 3">Fae</shortName>
        </alternativeName>
    </domain>
    <domain>
        <recommendedName>
            <fullName evidence="1 3">3-hexulose-6-phosphate synthase</fullName>
            <shortName evidence="1 3">HPS</shortName>
            <ecNumber evidence="1 2">4.1.2.43</ecNumber>
        </recommendedName>
        <alternativeName>
            <fullName evidence="1">D-arabino-3-hexulose-6-phosphate formaldehyde lyase</fullName>
        </alternativeName>
    </domain>
</protein>
<organism>
    <name type="scientific">Methanocaldococcus jannaschii (strain ATCC 43067 / DSM 2661 / JAL-1 / JCM 10045 / NBRC 100440)</name>
    <name type="common">Methanococcus jannaschii</name>
    <dbReference type="NCBI Taxonomy" id="243232"/>
    <lineage>
        <taxon>Archaea</taxon>
        <taxon>Methanobacteriati</taxon>
        <taxon>Methanobacteriota</taxon>
        <taxon>Methanomada group</taxon>
        <taxon>Methanococci</taxon>
        <taxon>Methanococcales</taxon>
        <taxon>Methanocaldococcaceae</taxon>
        <taxon>Methanocaldococcus</taxon>
    </lineage>
</organism>